<reference key="1">
    <citation type="journal article" date="2008" name="Chem. Biol. Interact.">
        <title>Extending the Bacillus cereus group genomics to putative food-borne pathogens of different toxicity.</title>
        <authorList>
            <person name="Lapidus A."/>
            <person name="Goltsman E."/>
            <person name="Auger S."/>
            <person name="Galleron N."/>
            <person name="Segurens B."/>
            <person name="Dossat C."/>
            <person name="Land M.L."/>
            <person name="Broussolle V."/>
            <person name="Brillard J."/>
            <person name="Guinebretiere M.-H."/>
            <person name="Sanchis V."/>
            <person name="Nguen-the C."/>
            <person name="Lereclus D."/>
            <person name="Richardson P."/>
            <person name="Wincker P."/>
            <person name="Weissenbach J."/>
            <person name="Ehrlich S.D."/>
            <person name="Sorokin A."/>
        </authorList>
    </citation>
    <scope>NUCLEOTIDE SEQUENCE [LARGE SCALE GENOMIC DNA]</scope>
    <source>
        <strain>KBAB4</strain>
    </source>
</reference>
<feature type="chain" id="PRO_1000137287" description="UPF0298 protein BcerKBAB4_3759">
    <location>
        <begin position="1"/>
        <end position="88"/>
    </location>
</feature>
<keyword id="KW-0963">Cytoplasm</keyword>
<organism>
    <name type="scientific">Bacillus mycoides (strain KBAB4)</name>
    <name type="common">Bacillus weihenstephanensis</name>
    <dbReference type="NCBI Taxonomy" id="315730"/>
    <lineage>
        <taxon>Bacteria</taxon>
        <taxon>Bacillati</taxon>
        <taxon>Bacillota</taxon>
        <taxon>Bacilli</taxon>
        <taxon>Bacillales</taxon>
        <taxon>Bacillaceae</taxon>
        <taxon>Bacillus</taxon>
        <taxon>Bacillus cereus group</taxon>
    </lineage>
</organism>
<name>Y3759_BACMK</name>
<protein>
    <recommendedName>
        <fullName evidence="1">UPF0298 protein BcerKBAB4_3759</fullName>
    </recommendedName>
</protein>
<dbReference type="EMBL" id="CP000903">
    <property type="protein sequence ID" value="ABY44928.1"/>
    <property type="molecule type" value="Genomic_DNA"/>
</dbReference>
<dbReference type="RefSeq" id="WP_002088292.1">
    <property type="nucleotide sequence ID" value="NZ_CAKMRX030000111.1"/>
</dbReference>
<dbReference type="SMR" id="A9VU94"/>
<dbReference type="KEGG" id="bwe:BcerKBAB4_3759"/>
<dbReference type="eggNOG" id="COG4471">
    <property type="taxonomic scope" value="Bacteria"/>
</dbReference>
<dbReference type="HOGENOM" id="CLU_159890_2_0_9"/>
<dbReference type="Proteomes" id="UP000002154">
    <property type="component" value="Chromosome"/>
</dbReference>
<dbReference type="GO" id="GO:0005737">
    <property type="term" value="C:cytoplasm"/>
    <property type="evidence" value="ECO:0007669"/>
    <property type="project" value="UniProtKB-SubCell"/>
</dbReference>
<dbReference type="HAMAP" id="MF_01126">
    <property type="entry name" value="UPF0298"/>
    <property type="match status" value="1"/>
</dbReference>
<dbReference type="InterPro" id="IPR016979">
    <property type="entry name" value="DUF2129"/>
</dbReference>
<dbReference type="NCBIfam" id="NF002777">
    <property type="entry name" value="PRK02886.1"/>
    <property type="match status" value="1"/>
</dbReference>
<dbReference type="Pfam" id="PF09902">
    <property type="entry name" value="DUF2129"/>
    <property type="match status" value="1"/>
</dbReference>
<dbReference type="PIRSF" id="PIRSF031653">
    <property type="entry name" value="UCP031653"/>
    <property type="match status" value="1"/>
</dbReference>
<sequence>MFGQRQSMIVYLHSLKHAKILRKYGNIHYISKRLKYAVVYCDMEQIEHMMQKLNKLPFVKKVEQSYRPFLKTEFENSRPDRAKEYDYS</sequence>
<accession>A9VU94</accession>
<evidence type="ECO:0000255" key="1">
    <source>
        <dbReference type="HAMAP-Rule" id="MF_01126"/>
    </source>
</evidence>
<proteinExistence type="inferred from homology"/>
<comment type="subcellular location">
    <subcellularLocation>
        <location evidence="1">Cytoplasm</location>
    </subcellularLocation>
</comment>
<comment type="similarity">
    <text evidence="1">Belongs to the UPF0298 family.</text>
</comment>
<gene>
    <name type="ordered locus">BcerKBAB4_3759</name>
</gene>